<dbReference type="EC" id="5.3.1.24" evidence="1"/>
<dbReference type="EMBL" id="CP000050">
    <property type="protein sequence ID" value="AAY48639.1"/>
    <property type="molecule type" value="Genomic_DNA"/>
</dbReference>
<dbReference type="RefSeq" id="WP_011037675.1">
    <property type="nucleotide sequence ID" value="NZ_CP155948.1"/>
</dbReference>
<dbReference type="SMR" id="Q4UWD4"/>
<dbReference type="KEGG" id="xcb:XC_1573"/>
<dbReference type="HOGENOM" id="CLU_076364_2_0_6"/>
<dbReference type="UniPathway" id="UPA00035">
    <property type="reaction ID" value="UER00042"/>
</dbReference>
<dbReference type="Proteomes" id="UP000000420">
    <property type="component" value="Chromosome"/>
</dbReference>
<dbReference type="GO" id="GO:0004640">
    <property type="term" value="F:phosphoribosylanthranilate isomerase activity"/>
    <property type="evidence" value="ECO:0007669"/>
    <property type="project" value="UniProtKB-UniRule"/>
</dbReference>
<dbReference type="GO" id="GO:0000162">
    <property type="term" value="P:L-tryptophan biosynthetic process"/>
    <property type="evidence" value="ECO:0007669"/>
    <property type="project" value="UniProtKB-UniRule"/>
</dbReference>
<dbReference type="CDD" id="cd00405">
    <property type="entry name" value="PRAI"/>
    <property type="match status" value="1"/>
</dbReference>
<dbReference type="Gene3D" id="3.20.20.70">
    <property type="entry name" value="Aldolase class I"/>
    <property type="match status" value="1"/>
</dbReference>
<dbReference type="HAMAP" id="MF_00135">
    <property type="entry name" value="PRAI"/>
    <property type="match status" value="1"/>
</dbReference>
<dbReference type="InterPro" id="IPR013785">
    <property type="entry name" value="Aldolase_TIM"/>
</dbReference>
<dbReference type="InterPro" id="IPR001240">
    <property type="entry name" value="PRAI_dom"/>
</dbReference>
<dbReference type="InterPro" id="IPR011060">
    <property type="entry name" value="RibuloseP-bd_barrel"/>
</dbReference>
<dbReference type="InterPro" id="IPR044643">
    <property type="entry name" value="TrpF_fam"/>
</dbReference>
<dbReference type="NCBIfam" id="NF002296">
    <property type="entry name" value="PRK01222.1-2"/>
    <property type="match status" value="1"/>
</dbReference>
<dbReference type="NCBIfam" id="NF002298">
    <property type="entry name" value="PRK01222.1-4"/>
    <property type="match status" value="1"/>
</dbReference>
<dbReference type="PANTHER" id="PTHR42894">
    <property type="entry name" value="N-(5'-PHOSPHORIBOSYL)ANTHRANILATE ISOMERASE"/>
    <property type="match status" value="1"/>
</dbReference>
<dbReference type="PANTHER" id="PTHR42894:SF1">
    <property type="entry name" value="N-(5'-PHOSPHORIBOSYL)ANTHRANILATE ISOMERASE"/>
    <property type="match status" value="1"/>
</dbReference>
<dbReference type="Pfam" id="PF00697">
    <property type="entry name" value="PRAI"/>
    <property type="match status" value="1"/>
</dbReference>
<dbReference type="SUPFAM" id="SSF51366">
    <property type="entry name" value="Ribulose-phoshate binding barrel"/>
    <property type="match status" value="1"/>
</dbReference>
<accession>Q4UWD4</accession>
<evidence type="ECO:0000255" key="1">
    <source>
        <dbReference type="HAMAP-Rule" id="MF_00135"/>
    </source>
</evidence>
<feature type="chain" id="PRO_1000018649" description="N-(5'-phosphoribosyl)anthranilate isomerase">
    <location>
        <begin position="1"/>
        <end position="222"/>
    </location>
</feature>
<comment type="catalytic activity">
    <reaction evidence="1">
        <text>N-(5-phospho-beta-D-ribosyl)anthranilate = 1-(2-carboxyphenylamino)-1-deoxy-D-ribulose 5-phosphate</text>
        <dbReference type="Rhea" id="RHEA:21540"/>
        <dbReference type="ChEBI" id="CHEBI:18277"/>
        <dbReference type="ChEBI" id="CHEBI:58613"/>
        <dbReference type="EC" id="5.3.1.24"/>
    </reaction>
</comment>
<comment type="pathway">
    <text evidence="1">Amino-acid biosynthesis; L-tryptophan biosynthesis; L-tryptophan from chorismate: step 3/5.</text>
</comment>
<comment type="similarity">
    <text evidence="1">Belongs to the TrpF family.</text>
</comment>
<keyword id="KW-0028">Amino-acid biosynthesis</keyword>
<keyword id="KW-0057">Aromatic amino acid biosynthesis</keyword>
<keyword id="KW-0413">Isomerase</keyword>
<keyword id="KW-0822">Tryptophan biosynthesis</keyword>
<reference key="1">
    <citation type="journal article" date="2005" name="Genome Res.">
        <title>Comparative and functional genomic analyses of the pathogenicity of phytopathogen Xanthomonas campestris pv. campestris.</title>
        <authorList>
            <person name="Qian W."/>
            <person name="Jia Y."/>
            <person name="Ren S.-X."/>
            <person name="He Y.-Q."/>
            <person name="Feng J.-X."/>
            <person name="Lu L.-F."/>
            <person name="Sun Q."/>
            <person name="Ying G."/>
            <person name="Tang D.-J."/>
            <person name="Tang H."/>
            <person name="Wu W."/>
            <person name="Hao P."/>
            <person name="Wang L."/>
            <person name="Jiang B.-L."/>
            <person name="Zeng S."/>
            <person name="Gu W.-Y."/>
            <person name="Lu G."/>
            <person name="Rong L."/>
            <person name="Tian Y."/>
            <person name="Yao Z."/>
            <person name="Fu G."/>
            <person name="Chen B."/>
            <person name="Fang R."/>
            <person name="Qiang B."/>
            <person name="Chen Z."/>
            <person name="Zhao G.-P."/>
            <person name="Tang J.-L."/>
            <person name="He C."/>
        </authorList>
    </citation>
    <scope>NUCLEOTIDE SEQUENCE [LARGE SCALE GENOMIC DNA]</scope>
    <source>
        <strain>8004</strain>
    </source>
</reference>
<proteinExistence type="inferred from homology"/>
<name>TRPF_XANC8</name>
<protein>
    <recommendedName>
        <fullName evidence="1">N-(5'-phosphoribosyl)anthranilate isomerase</fullName>
        <shortName evidence="1">PRAI</shortName>
        <ecNumber evidence="1">5.3.1.24</ecNumber>
    </recommendedName>
</protein>
<organism>
    <name type="scientific">Xanthomonas campestris pv. campestris (strain 8004)</name>
    <dbReference type="NCBI Taxonomy" id="314565"/>
    <lineage>
        <taxon>Bacteria</taxon>
        <taxon>Pseudomonadati</taxon>
        <taxon>Pseudomonadota</taxon>
        <taxon>Gammaproteobacteria</taxon>
        <taxon>Lysobacterales</taxon>
        <taxon>Lysobacteraceae</taxon>
        <taxon>Xanthomonas</taxon>
    </lineage>
</organism>
<gene>
    <name evidence="1" type="primary">trpF</name>
    <name type="ordered locus">XC_1573</name>
</gene>
<sequence>MNRSLYRTRIKFCGMTRAGDIRLAGELGVDAVGFIFAHGSPRRVAPAEARAMRQATAPMVDVVALFRNNSKEEVREVVRTVRPTLLQFHGEEDDAFCRSFNLPYLKAVPMGASGVNGEDANARTLQLAYPNTAGFLFDSHAPGEGGGTGKTFDWSRLPTGLHRPFLLAGGITADNVFDAIVATLPWGVDVSSGVELAPGIKDGHKMRKFVEEVRRADCHEMS</sequence>